<keyword id="KW-0963">Cytoplasm</keyword>
<keyword id="KW-0227">DNA damage</keyword>
<keyword id="KW-0233">DNA recombination</keyword>
<keyword id="KW-0234">DNA repair</keyword>
<keyword id="KW-0238">DNA-binding</keyword>
<accession>B0SUN8</accession>
<dbReference type="EMBL" id="CP000927">
    <property type="protein sequence ID" value="ABZ69916.1"/>
    <property type="molecule type" value="Genomic_DNA"/>
</dbReference>
<dbReference type="SMR" id="B0SUN8"/>
<dbReference type="STRING" id="366602.Caul_0785"/>
<dbReference type="KEGG" id="cak:Caul_0785"/>
<dbReference type="eggNOG" id="COG0632">
    <property type="taxonomic scope" value="Bacteria"/>
</dbReference>
<dbReference type="HOGENOM" id="CLU_087936_3_0_5"/>
<dbReference type="OrthoDB" id="5293449at2"/>
<dbReference type="GO" id="GO:0005737">
    <property type="term" value="C:cytoplasm"/>
    <property type="evidence" value="ECO:0007669"/>
    <property type="project" value="UniProtKB-SubCell"/>
</dbReference>
<dbReference type="GO" id="GO:0009379">
    <property type="term" value="C:Holliday junction helicase complex"/>
    <property type="evidence" value="ECO:0007669"/>
    <property type="project" value="InterPro"/>
</dbReference>
<dbReference type="GO" id="GO:0048476">
    <property type="term" value="C:Holliday junction resolvase complex"/>
    <property type="evidence" value="ECO:0007669"/>
    <property type="project" value="UniProtKB-UniRule"/>
</dbReference>
<dbReference type="GO" id="GO:0005524">
    <property type="term" value="F:ATP binding"/>
    <property type="evidence" value="ECO:0007669"/>
    <property type="project" value="InterPro"/>
</dbReference>
<dbReference type="GO" id="GO:0000400">
    <property type="term" value="F:four-way junction DNA binding"/>
    <property type="evidence" value="ECO:0007669"/>
    <property type="project" value="UniProtKB-UniRule"/>
</dbReference>
<dbReference type="GO" id="GO:0009378">
    <property type="term" value="F:four-way junction helicase activity"/>
    <property type="evidence" value="ECO:0007669"/>
    <property type="project" value="InterPro"/>
</dbReference>
<dbReference type="GO" id="GO:0006310">
    <property type="term" value="P:DNA recombination"/>
    <property type="evidence" value="ECO:0007669"/>
    <property type="project" value="UniProtKB-UniRule"/>
</dbReference>
<dbReference type="GO" id="GO:0006281">
    <property type="term" value="P:DNA repair"/>
    <property type="evidence" value="ECO:0007669"/>
    <property type="project" value="UniProtKB-UniRule"/>
</dbReference>
<dbReference type="Gene3D" id="1.10.150.20">
    <property type="entry name" value="5' to 3' exonuclease, C-terminal subdomain"/>
    <property type="match status" value="1"/>
</dbReference>
<dbReference type="Gene3D" id="1.10.8.10">
    <property type="entry name" value="DNA helicase RuvA subunit, C-terminal domain"/>
    <property type="match status" value="1"/>
</dbReference>
<dbReference type="Gene3D" id="2.40.50.140">
    <property type="entry name" value="Nucleic acid-binding proteins"/>
    <property type="match status" value="1"/>
</dbReference>
<dbReference type="HAMAP" id="MF_00031">
    <property type="entry name" value="DNA_HJ_migration_RuvA"/>
    <property type="match status" value="1"/>
</dbReference>
<dbReference type="InterPro" id="IPR013849">
    <property type="entry name" value="DNA_helicase_Holl-junc_RuvA_I"/>
</dbReference>
<dbReference type="InterPro" id="IPR012340">
    <property type="entry name" value="NA-bd_OB-fold"/>
</dbReference>
<dbReference type="InterPro" id="IPR000085">
    <property type="entry name" value="RuvA"/>
</dbReference>
<dbReference type="InterPro" id="IPR010994">
    <property type="entry name" value="RuvA_2-like"/>
</dbReference>
<dbReference type="InterPro" id="IPR011114">
    <property type="entry name" value="RuvA_C"/>
</dbReference>
<dbReference type="InterPro" id="IPR036267">
    <property type="entry name" value="RuvA_C_sf"/>
</dbReference>
<dbReference type="NCBIfam" id="TIGR00084">
    <property type="entry name" value="ruvA"/>
    <property type="match status" value="1"/>
</dbReference>
<dbReference type="Pfam" id="PF14520">
    <property type="entry name" value="HHH_5"/>
    <property type="match status" value="1"/>
</dbReference>
<dbReference type="Pfam" id="PF07499">
    <property type="entry name" value="RuvA_C"/>
    <property type="match status" value="1"/>
</dbReference>
<dbReference type="Pfam" id="PF01330">
    <property type="entry name" value="RuvA_N"/>
    <property type="match status" value="1"/>
</dbReference>
<dbReference type="SUPFAM" id="SSF46929">
    <property type="entry name" value="DNA helicase RuvA subunit, C-terminal domain"/>
    <property type="match status" value="1"/>
</dbReference>
<dbReference type="SUPFAM" id="SSF50249">
    <property type="entry name" value="Nucleic acid-binding proteins"/>
    <property type="match status" value="1"/>
</dbReference>
<dbReference type="SUPFAM" id="SSF47781">
    <property type="entry name" value="RuvA domain 2-like"/>
    <property type="match status" value="1"/>
</dbReference>
<comment type="function">
    <text evidence="1">The RuvA-RuvB-RuvC complex processes Holliday junction (HJ) DNA during genetic recombination and DNA repair, while the RuvA-RuvB complex plays an important role in the rescue of blocked DNA replication forks via replication fork reversal (RFR). RuvA specifically binds to HJ cruciform DNA, conferring on it an open structure. The RuvB hexamer acts as an ATP-dependent pump, pulling dsDNA into and through the RuvAB complex. HJ branch migration allows RuvC to scan DNA until it finds its consensus sequence, where it cleaves and resolves the cruciform DNA.</text>
</comment>
<comment type="subunit">
    <text evidence="1">Homotetramer. Forms an RuvA(8)-RuvB(12)-Holliday junction (HJ) complex. HJ DNA is sandwiched between 2 RuvA tetramers; dsDNA enters through RuvA and exits via RuvB. An RuvB hexamer assembles on each DNA strand where it exits the tetramer. Each RuvB hexamer is contacted by two RuvA subunits (via domain III) on 2 adjacent RuvB subunits; this complex drives branch migration. In the full resolvosome a probable DNA-RuvA(4)-RuvB(12)-RuvC(2) complex forms which resolves the HJ.</text>
</comment>
<comment type="subcellular location">
    <subcellularLocation>
        <location evidence="1">Cytoplasm</location>
    </subcellularLocation>
</comment>
<comment type="domain">
    <text evidence="1">Has three domains with a flexible linker between the domains II and III and assumes an 'L' shape. Domain III is highly mobile and contacts RuvB.</text>
</comment>
<comment type="similarity">
    <text evidence="1">Belongs to the RuvA family.</text>
</comment>
<gene>
    <name evidence="1" type="primary">ruvA</name>
    <name type="ordered locus">Caul_0785</name>
</gene>
<name>RUVA_CAUSK</name>
<reference key="1">
    <citation type="submission" date="2008-01" db="EMBL/GenBank/DDBJ databases">
        <title>Complete sequence of chromosome of Caulobacter sp. K31.</title>
        <authorList>
            <consortium name="US DOE Joint Genome Institute"/>
            <person name="Copeland A."/>
            <person name="Lucas S."/>
            <person name="Lapidus A."/>
            <person name="Barry K."/>
            <person name="Glavina del Rio T."/>
            <person name="Dalin E."/>
            <person name="Tice H."/>
            <person name="Pitluck S."/>
            <person name="Bruce D."/>
            <person name="Goodwin L."/>
            <person name="Thompson L.S."/>
            <person name="Brettin T."/>
            <person name="Detter J.C."/>
            <person name="Han C."/>
            <person name="Schmutz J."/>
            <person name="Larimer F."/>
            <person name="Land M."/>
            <person name="Hauser L."/>
            <person name="Kyrpides N."/>
            <person name="Kim E."/>
            <person name="Stephens C."/>
            <person name="Richardson P."/>
        </authorList>
    </citation>
    <scope>NUCLEOTIDE SEQUENCE [LARGE SCALE GENOMIC DNA]</scope>
    <source>
        <strain>K31</strain>
    </source>
</reference>
<protein>
    <recommendedName>
        <fullName evidence="1">Holliday junction branch migration complex subunit RuvA</fullName>
    </recommendedName>
</protein>
<feature type="chain" id="PRO_1000074413" description="Holliday junction branch migration complex subunit RuvA">
    <location>
        <begin position="1"/>
        <end position="204"/>
    </location>
</feature>
<feature type="region of interest" description="Domain I" evidence="1">
    <location>
        <begin position="1"/>
        <end position="65"/>
    </location>
</feature>
<feature type="region of interest" description="Domain II" evidence="1">
    <location>
        <begin position="66"/>
        <end position="142"/>
    </location>
</feature>
<feature type="region of interest" description="Flexible linker" evidence="1">
    <location>
        <begin position="143"/>
        <end position="152"/>
    </location>
</feature>
<feature type="region of interest" description="Domain III" evidence="1">
    <location>
        <begin position="152"/>
        <end position="204"/>
    </location>
</feature>
<organism>
    <name type="scientific">Caulobacter sp. (strain K31)</name>
    <dbReference type="NCBI Taxonomy" id="366602"/>
    <lineage>
        <taxon>Bacteria</taxon>
        <taxon>Pseudomonadati</taxon>
        <taxon>Pseudomonadota</taxon>
        <taxon>Alphaproteobacteria</taxon>
        <taxon>Caulobacterales</taxon>
        <taxon>Caulobacteraceae</taxon>
        <taxon>Caulobacter</taxon>
    </lineage>
</organism>
<proteinExistence type="inferred from homology"/>
<sequence length="204" mass="20937">MIGRLRGAVAEIGEEEALIDVMGVGYVVRCGSRTLQRLPALGEEALLHIESQWSESAGLRLYGFGTREDRRAFVLLQAIQGVGPKAAMAVLDVLSPAELASAVAREDKAAVGRASGVGPKLALRIVTELKDKPITDGPVLMTAPGAVAAAPAKAAPTGDAVAALMGLGVAEVNARRVVEAAAAKLGDEATVQALIKAGLQELGR</sequence>
<evidence type="ECO:0000255" key="1">
    <source>
        <dbReference type="HAMAP-Rule" id="MF_00031"/>
    </source>
</evidence>